<proteinExistence type="inferred from homology"/>
<keyword id="KW-0963">Cytoplasm</keyword>
<keyword id="KW-0489">Methyltransferase</keyword>
<keyword id="KW-0694">RNA-binding</keyword>
<keyword id="KW-0698">rRNA processing</keyword>
<keyword id="KW-0949">S-adenosyl-L-methionine</keyword>
<keyword id="KW-0808">Transferase</keyword>
<accession>Q0TJ93</accession>
<evidence type="ECO:0000255" key="1">
    <source>
        <dbReference type="HAMAP-Rule" id="MF_01857"/>
    </source>
</evidence>
<gene>
    <name evidence="1" type="primary">rlmI</name>
    <name type="ordered locus">ECP_0973</name>
</gene>
<sequence>MSVRLVLAKGREKSLLRRHPWVFSGAVARMEGKASLGETIDIVDHQGKWLARGAYSPASQIRARVWTFDPSESIDIAFFTRRLQQAQKWRDWLAQKDGLDSYRLIAGESDGLPGITIDRFGNFLVLQLLSAGAEYQRAALISALQTLYPECAIYDRSDVAVRKKEGMELTQGPITGELPPALLPIEEHGMKLLVDIQHGHKTGYYLDQRDSRLATRRYVENKRVLNCFSYTGGFAVSALMGGCSQVVSVDTSHEALDIARQNVELNKLDLSKAEFVRDDVFKLLRTYRDRGEKFDVIVMDPPKFVENKSQLMGACRGYKDINMLAIQLLNEGGILLTFSCSGLMTSDLFQKIIADAAIDAGRDVQFIEQFRQAADHPVIATYPEGLYLKGFACRVM</sequence>
<dbReference type="EC" id="2.1.1.191" evidence="1"/>
<dbReference type="EMBL" id="CP000247">
    <property type="protein sequence ID" value="ABG68986.1"/>
    <property type="molecule type" value="Genomic_DNA"/>
</dbReference>
<dbReference type="RefSeq" id="WP_000116315.1">
    <property type="nucleotide sequence ID" value="NC_008253.1"/>
</dbReference>
<dbReference type="SMR" id="Q0TJ93"/>
<dbReference type="KEGG" id="ecp:ECP_0973"/>
<dbReference type="HOGENOM" id="CLU_014042_0_0_6"/>
<dbReference type="Proteomes" id="UP000009182">
    <property type="component" value="Chromosome"/>
</dbReference>
<dbReference type="GO" id="GO:0005737">
    <property type="term" value="C:cytoplasm"/>
    <property type="evidence" value="ECO:0007669"/>
    <property type="project" value="UniProtKB-SubCell"/>
</dbReference>
<dbReference type="GO" id="GO:0003723">
    <property type="term" value="F:RNA binding"/>
    <property type="evidence" value="ECO:0007669"/>
    <property type="project" value="UniProtKB-KW"/>
</dbReference>
<dbReference type="GO" id="GO:0016434">
    <property type="term" value="F:rRNA (cytosine) methyltransferase activity"/>
    <property type="evidence" value="ECO:0007669"/>
    <property type="project" value="UniProtKB-UniRule"/>
</dbReference>
<dbReference type="CDD" id="cd02440">
    <property type="entry name" value="AdoMet_MTases"/>
    <property type="match status" value="1"/>
</dbReference>
<dbReference type="CDD" id="cd21153">
    <property type="entry name" value="PUA_RlmI"/>
    <property type="match status" value="1"/>
</dbReference>
<dbReference type="CDD" id="cd11572">
    <property type="entry name" value="RlmI_M_like"/>
    <property type="match status" value="1"/>
</dbReference>
<dbReference type="FunFam" id="2.30.130.10:FF:000005">
    <property type="entry name" value="Ribosomal RNA large subunit methyltransferase I"/>
    <property type="match status" value="1"/>
</dbReference>
<dbReference type="FunFam" id="3.30.750.80:FF:000002">
    <property type="entry name" value="Ribosomal RNA large subunit methyltransferase I"/>
    <property type="match status" value="1"/>
</dbReference>
<dbReference type="FunFam" id="3.40.50.150:FF:000044">
    <property type="entry name" value="Ribosomal RNA large subunit methyltransferase I"/>
    <property type="match status" value="1"/>
</dbReference>
<dbReference type="Gene3D" id="2.30.130.10">
    <property type="entry name" value="PUA domain"/>
    <property type="match status" value="1"/>
</dbReference>
<dbReference type="Gene3D" id="3.30.750.80">
    <property type="entry name" value="RNA methyltransferase domain (HRMD) like"/>
    <property type="match status" value="1"/>
</dbReference>
<dbReference type="Gene3D" id="3.40.50.150">
    <property type="entry name" value="Vaccinia Virus protein VP39"/>
    <property type="match status" value="1"/>
</dbReference>
<dbReference type="HAMAP" id="MF_01857">
    <property type="entry name" value="23SrRNA_methyltr_I"/>
    <property type="match status" value="1"/>
</dbReference>
<dbReference type="InterPro" id="IPR002478">
    <property type="entry name" value="PUA"/>
</dbReference>
<dbReference type="InterPro" id="IPR015947">
    <property type="entry name" value="PUA-like_sf"/>
</dbReference>
<dbReference type="InterPro" id="IPR036974">
    <property type="entry name" value="PUA_sf"/>
</dbReference>
<dbReference type="InterPro" id="IPR023542">
    <property type="entry name" value="RLMI"/>
</dbReference>
<dbReference type="InterPro" id="IPR041532">
    <property type="entry name" value="RlmI-like_PUA"/>
</dbReference>
<dbReference type="InterPro" id="IPR019614">
    <property type="entry name" value="SAM-dep_methyl-trfase"/>
</dbReference>
<dbReference type="InterPro" id="IPR029063">
    <property type="entry name" value="SAM-dependent_MTases_sf"/>
</dbReference>
<dbReference type="NCBIfam" id="NF011707">
    <property type="entry name" value="PRK15128.1"/>
    <property type="match status" value="1"/>
</dbReference>
<dbReference type="PANTHER" id="PTHR42873">
    <property type="entry name" value="RIBOSOMAL RNA LARGE SUBUNIT METHYLTRANSFERASE"/>
    <property type="match status" value="1"/>
</dbReference>
<dbReference type="PANTHER" id="PTHR42873:SF1">
    <property type="entry name" value="S-ADENOSYLMETHIONINE-DEPENDENT METHYLTRANSFERASE DOMAIN-CONTAINING PROTEIN"/>
    <property type="match status" value="1"/>
</dbReference>
<dbReference type="Pfam" id="PF10672">
    <property type="entry name" value="Methyltrans_SAM"/>
    <property type="match status" value="1"/>
</dbReference>
<dbReference type="Pfam" id="PF17785">
    <property type="entry name" value="PUA_3"/>
    <property type="match status" value="1"/>
</dbReference>
<dbReference type="SMART" id="SM00359">
    <property type="entry name" value="PUA"/>
    <property type="match status" value="1"/>
</dbReference>
<dbReference type="SUPFAM" id="SSF88697">
    <property type="entry name" value="PUA domain-like"/>
    <property type="match status" value="1"/>
</dbReference>
<dbReference type="SUPFAM" id="SSF53335">
    <property type="entry name" value="S-adenosyl-L-methionine-dependent methyltransferases"/>
    <property type="match status" value="1"/>
</dbReference>
<dbReference type="PROSITE" id="PS50890">
    <property type="entry name" value="PUA"/>
    <property type="match status" value="1"/>
</dbReference>
<reference key="1">
    <citation type="journal article" date="2006" name="Mol. Microbiol.">
        <title>Role of pathogenicity island-associated integrases in the genome plasticity of uropathogenic Escherichia coli strain 536.</title>
        <authorList>
            <person name="Hochhut B."/>
            <person name="Wilde C."/>
            <person name="Balling G."/>
            <person name="Middendorf B."/>
            <person name="Dobrindt U."/>
            <person name="Brzuszkiewicz E."/>
            <person name="Gottschalk G."/>
            <person name="Carniel E."/>
            <person name="Hacker J."/>
        </authorList>
    </citation>
    <scope>NUCLEOTIDE SEQUENCE [LARGE SCALE GENOMIC DNA]</scope>
    <source>
        <strain>536 / UPEC</strain>
    </source>
</reference>
<organism>
    <name type="scientific">Escherichia coli O6:K15:H31 (strain 536 / UPEC)</name>
    <dbReference type="NCBI Taxonomy" id="362663"/>
    <lineage>
        <taxon>Bacteria</taxon>
        <taxon>Pseudomonadati</taxon>
        <taxon>Pseudomonadota</taxon>
        <taxon>Gammaproteobacteria</taxon>
        <taxon>Enterobacterales</taxon>
        <taxon>Enterobacteriaceae</taxon>
        <taxon>Escherichia</taxon>
    </lineage>
</organism>
<name>RLMI_ECOL5</name>
<feature type="chain" id="PRO_0000366232" description="Ribosomal RNA large subunit methyltransferase I">
    <location>
        <begin position="1"/>
        <end position="396"/>
    </location>
</feature>
<feature type="domain" description="PUA" evidence="1">
    <location>
        <begin position="2"/>
        <end position="81"/>
    </location>
</feature>
<comment type="function">
    <text evidence="1">Specifically methylates the cytosine at position 1962 (m5C1962) of 23S rRNA.</text>
</comment>
<comment type="catalytic activity">
    <reaction evidence="1">
        <text>cytidine(1962) in 23S rRNA + S-adenosyl-L-methionine = 5-methylcytidine(1962) in 23S rRNA + S-adenosyl-L-homocysteine + H(+)</text>
        <dbReference type="Rhea" id="RHEA:42912"/>
        <dbReference type="Rhea" id="RHEA-COMP:10382"/>
        <dbReference type="Rhea" id="RHEA-COMP:10386"/>
        <dbReference type="ChEBI" id="CHEBI:15378"/>
        <dbReference type="ChEBI" id="CHEBI:57856"/>
        <dbReference type="ChEBI" id="CHEBI:59789"/>
        <dbReference type="ChEBI" id="CHEBI:74483"/>
        <dbReference type="ChEBI" id="CHEBI:82748"/>
        <dbReference type="EC" id="2.1.1.191"/>
    </reaction>
</comment>
<comment type="subcellular location">
    <subcellularLocation>
        <location evidence="1">Cytoplasm</location>
    </subcellularLocation>
</comment>
<comment type="similarity">
    <text evidence="1">Belongs to the methyltransferase superfamily. RlmI family.</text>
</comment>
<protein>
    <recommendedName>
        <fullName evidence="1">Ribosomal RNA large subunit methyltransferase I</fullName>
        <ecNumber evidence="1">2.1.1.191</ecNumber>
    </recommendedName>
    <alternativeName>
        <fullName evidence="1">23S rRNA m5C1962 methyltransferase</fullName>
    </alternativeName>
    <alternativeName>
        <fullName evidence="1">rRNA (cytosine-C(5)-)-methyltransferase RlmI</fullName>
    </alternativeName>
</protein>